<protein>
    <recommendedName>
        <fullName>Interferon beta-2</fullName>
    </recommendedName>
</protein>
<proteinExistence type="inferred from homology"/>
<accession>P01576</accession>
<feature type="signal peptide">
    <location>
        <begin position="1"/>
        <end position="21"/>
    </location>
</feature>
<feature type="chain" id="PRO_0000016397" description="Interferon beta-2">
    <location>
        <begin position="22"/>
        <end position="186"/>
    </location>
</feature>
<feature type="glycosylation site" description="N-linked (GlcNAc...) asparagine" evidence="1">
    <location>
        <position position="131"/>
    </location>
</feature>
<feature type="glycosylation site" description="N-linked (GlcNAc...) asparagine" evidence="1">
    <location>
        <position position="173"/>
    </location>
</feature>
<feature type="disulfide bond" evidence="2">
    <location>
        <begin position="52"/>
        <end position="161"/>
    </location>
</feature>
<reference key="1">
    <citation type="journal article" date="1984" name="Biotechnology (N.Y.)">
        <title>The structure and bacterial expression of three distinct bovine interferon-beta genes.</title>
        <authorList>
            <person name="Leung D.W."/>
            <person name="Capon D.J."/>
            <person name="Goeddel D.V."/>
        </authorList>
    </citation>
    <scope>NUCLEOTIDE SEQUENCE [GENOMIC DNA]</scope>
</reference>
<evidence type="ECO:0000255" key="1"/>
<evidence type="ECO:0000305" key="2"/>
<name>IFNB2_BOVIN</name>
<comment type="function">
    <text>Has antiviral, antibacterial and anticancer activities.</text>
</comment>
<comment type="subunit">
    <text>Monomer.</text>
</comment>
<comment type="subcellular location">
    <subcellularLocation>
        <location>Secreted</location>
    </subcellularLocation>
</comment>
<comment type="similarity">
    <text evidence="2">Belongs to the alpha/beta interferon family.</text>
</comment>
<dbReference type="EMBL" id="M15478">
    <property type="protein sequence ID" value="AAA30580.1"/>
    <property type="molecule type" value="Genomic_DNA"/>
</dbReference>
<dbReference type="PIR" id="A01840">
    <property type="entry name" value="IVBOB2"/>
</dbReference>
<dbReference type="SMR" id="P01576"/>
<dbReference type="FunCoup" id="P01576">
    <property type="interactions" value="327"/>
</dbReference>
<dbReference type="STRING" id="9913.ENSBTAP00000045034"/>
<dbReference type="GlyCosmos" id="P01576">
    <property type="glycosylation" value="2 sites, No reported glycans"/>
</dbReference>
<dbReference type="GlyGen" id="P01576">
    <property type="glycosylation" value="2 sites"/>
</dbReference>
<dbReference type="PaxDb" id="9913-ENSBTAP00000045034"/>
<dbReference type="Ensembl" id="ENSBTAT00000047871.3">
    <property type="protein sequence ID" value="ENSBTAP00000045034.2"/>
    <property type="gene ID" value="ENSBTAG00000056399.1"/>
</dbReference>
<dbReference type="KEGG" id="bta:517016"/>
<dbReference type="VEuPathDB" id="HostDB:ENSBTAG00000054945"/>
<dbReference type="eggNOG" id="ENOG502SQGR">
    <property type="taxonomic scope" value="Eukaryota"/>
</dbReference>
<dbReference type="GeneTree" id="ENSGT01000000214430"/>
<dbReference type="HOGENOM" id="CLU_109427_1_0_1"/>
<dbReference type="InParanoid" id="P01576"/>
<dbReference type="OMA" id="HWQKEHL"/>
<dbReference type="OrthoDB" id="8922121at2759"/>
<dbReference type="TreeFam" id="TF336177"/>
<dbReference type="Proteomes" id="UP000009136">
    <property type="component" value="Chromosome 8"/>
</dbReference>
<dbReference type="Bgee" id="ENSBTAG00000054945">
    <property type="expression patterns" value="Expressed in thymus and 57 other cell types or tissues"/>
</dbReference>
<dbReference type="GO" id="GO:0005615">
    <property type="term" value="C:extracellular space"/>
    <property type="evidence" value="ECO:0000318"/>
    <property type="project" value="GO_Central"/>
</dbReference>
<dbReference type="GO" id="GO:0005125">
    <property type="term" value="F:cytokine activity"/>
    <property type="evidence" value="ECO:0000318"/>
    <property type="project" value="GO_Central"/>
</dbReference>
<dbReference type="GO" id="GO:0005132">
    <property type="term" value="F:type I interferon receptor binding"/>
    <property type="evidence" value="ECO:0000318"/>
    <property type="project" value="GO_Central"/>
</dbReference>
<dbReference type="GO" id="GO:0002250">
    <property type="term" value="P:adaptive immune response"/>
    <property type="evidence" value="ECO:0000318"/>
    <property type="project" value="GO_Central"/>
</dbReference>
<dbReference type="GO" id="GO:0002312">
    <property type="term" value="P:B cell activation involved in immune response"/>
    <property type="evidence" value="ECO:0000318"/>
    <property type="project" value="GO_Central"/>
</dbReference>
<dbReference type="GO" id="GO:0051607">
    <property type="term" value="P:defense response to virus"/>
    <property type="evidence" value="ECO:0007669"/>
    <property type="project" value="UniProtKB-KW"/>
</dbReference>
<dbReference type="GO" id="GO:0006959">
    <property type="term" value="P:humoral immune response"/>
    <property type="evidence" value="ECO:0000318"/>
    <property type="project" value="GO_Central"/>
</dbReference>
<dbReference type="GO" id="GO:0002323">
    <property type="term" value="P:natural killer cell activation involved in immune response"/>
    <property type="evidence" value="ECO:0000318"/>
    <property type="project" value="GO_Central"/>
</dbReference>
<dbReference type="GO" id="GO:0009891">
    <property type="term" value="P:positive regulation of biosynthetic process"/>
    <property type="evidence" value="ECO:0007669"/>
    <property type="project" value="UniProtKB-ARBA"/>
</dbReference>
<dbReference type="GO" id="GO:0043330">
    <property type="term" value="P:response to exogenous dsRNA"/>
    <property type="evidence" value="ECO:0000318"/>
    <property type="project" value="GO_Central"/>
</dbReference>
<dbReference type="GO" id="GO:0002286">
    <property type="term" value="P:T cell activation involved in immune response"/>
    <property type="evidence" value="ECO:0000318"/>
    <property type="project" value="GO_Central"/>
</dbReference>
<dbReference type="GO" id="GO:0060337">
    <property type="term" value="P:type I interferon-mediated signaling pathway"/>
    <property type="evidence" value="ECO:0000318"/>
    <property type="project" value="GO_Central"/>
</dbReference>
<dbReference type="CDD" id="cd00095">
    <property type="entry name" value="IFab"/>
    <property type="match status" value="1"/>
</dbReference>
<dbReference type="FunFam" id="1.20.1250.10:FF:000026">
    <property type="entry name" value="Interferon beta"/>
    <property type="match status" value="1"/>
</dbReference>
<dbReference type="Gene3D" id="1.20.1250.10">
    <property type="match status" value="1"/>
</dbReference>
<dbReference type="InterPro" id="IPR009079">
    <property type="entry name" value="4_helix_cytokine-like_core"/>
</dbReference>
<dbReference type="InterPro" id="IPR000471">
    <property type="entry name" value="Interferon_alpha/beta/delta"/>
</dbReference>
<dbReference type="PANTHER" id="PTHR11691:SF73">
    <property type="entry name" value="INTERFERON BETA"/>
    <property type="match status" value="1"/>
</dbReference>
<dbReference type="PANTHER" id="PTHR11691">
    <property type="entry name" value="TYPE I INTERFERON"/>
    <property type="match status" value="1"/>
</dbReference>
<dbReference type="Pfam" id="PF00143">
    <property type="entry name" value="Interferon"/>
    <property type="match status" value="1"/>
</dbReference>
<dbReference type="PRINTS" id="PR00266">
    <property type="entry name" value="INTERFERONAB"/>
</dbReference>
<dbReference type="SMART" id="SM00076">
    <property type="entry name" value="IFabd"/>
    <property type="match status" value="1"/>
</dbReference>
<dbReference type="SUPFAM" id="SSF47266">
    <property type="entry name" value="4-helical cytokines"/>
    <property type="match status" value="1"/>
</dbReference>
<dbReference type="PROSITE" id="PS00252">
    <property type="entry name" value="INTERFERON_A_B_D"/>
    <property type="match status" value="1"/>
</dbReference>
<keyword id="KW-0051">Antiviral defense</keyword>
<keyword id="KW-0202">Cytokine</keyword>
<keyword id="KW-1015">Disulfide bond</keyword>
<keyword id="KW-0325">Glycoprotein</keyword>
<keyword id="KW-1185">Reference proteome</keyword>
<keyword id="KW-0964">Secreted</keyword>
<keyword id="KW-0732">Signal</keyword>
<organism>
    <name type="scientific">Bos taurus</name>
    <name type="common">Bovine</name>
    <dbReference type="NCBI Taxonomy" id="9913"/>
    <lineage>
        <taxon>Eukaryota</taxon>
        <taxon>Metazoa</taxon>
        <taxon>Chordata</taxon>
        <taxon>Craniata</taxon>
        <taxon>Vertebrata</taxon>
        <taxon>Euteleostomi</taxon>
        <taxon>Mammalia</taxon>
        <taxon>Eutheria</taxon>
        <taxon>Laurasiatheria</taxon>
        <taxon>Artiodactyla</taxon>
        <taxon>Ruminantia</taxon>
        <taxon>Pecora</taxon>
        <taxon>Bovidae</taxon>
        <taxon>Bovinae</taxon>
        <taxon>Bos</taxon>
    </lineage>
</organism>
<gene>
    <name type="primary">IFNB2</name>
</gene>
<sequence length="186" mass="22319">MTHRCLLQMVLLLCFSTTALSRSYSLLRFQQRRSLALCQKLLRQLPSTPQHCLEARMDFQMPEEMKQAQQFQKEDAILVIYEMLQQIFNILTRDFSSTGWSETIIEDLLEELYEQMNHLEPIQKEIMQKQNSTMGDTTVLHLRKYYFNLVQYLKSKEYNRCAWTVVRVQILRNFSFLTRLTGYLRE</sequence>